<keyword id="KW-0025">Alternative splicing</keyword>
<keyword id="KW-0963">Cytoplasm</keyword>
<keyword id="KW-0539">Nucleus</keyword>
<keyword id="KW-0597">Phosphoprotein</keyword>
<keyword id="KW-0620">Polyamine biosynthesis</keyword>
<keyword id="KW-1267">Proteomics identification</keyword>
<keyword id="KW-1185">Reference proteome</keyword>
<keyword id="KW-0688">Ribosomal frameshifting</keyword>
<sequence>MPCKRCRPSVYSLSYIKRGKTRNYLYPIWSPYAYYLYCYKYRITLREKMLPRCYKSITYKEEEDLTLQPRSCLQCSESLVGLQEGKSTEQGNHDQLKELYSAGNLTVLATDPLLHQDPVQLDFHFRLTSQTSAHWHGLLCDRRLFLDIPYQALDQGNRESLTATLEYVEEKTNVDSVFVNFQNDRNDRGALLRAFSYMGFEVVRPDHPALPPLDNVIFMVYPLERDVGHLPSEPP</sequence>
<accession>Q9UMX2</accession>
<accession>E7EUE7</accession>
<accession>Q6GMR0</accession>
<protein>
    <recommendedName>
        <fullName>Ornithine decarboxylase antizyme 3</fullName>
        <shortName>AZ3</shortName>
        <shortName>ODC-Az 3</shortName>
    </recommendedName>
</protein>
<gene>
    <name type="primary">OAZ3</name>
</gene>
<comment type="function">
    <text evidence="4 5">Ornithine decarboxylase (ODC) antizyme protein that negatively regulates ODC activity and intracellular polyamine biosynthesis and uptake in response to increased intracellular polyamine levels. Binds to ODC monomers, inhibiting the assembly of the functional ODC homodimers. Does not target the ODC monomers for degradation, which allows a protein synthesis-independent restoration of ODC activity (PubMed:17900240). Stabilizes AZIN2 by interfering with its ubiquitination. Involved in the translocation of AZNI2 from ER-Golgi intermediate compartment (ERGIC) to the cytosol. Probably plays a key role in spermatogenesis by regulating the intracellular concentration of polyamines in haploid germ cells (By similarity).</text>
</comment>
<comment type="subunit">
    <text evidence="3 4 5">Interacts with ODC1 and thereby sterically blocks ODC homodimerization (By similarity). Interacts with AZIN2; this interaction disrupts the interaction between the antizyme and ODC1 (PubMed:17900240). Interacts with GGN (By similarity).</text>
</comment>
<comment type="interaction">
    <interactant intactId="EBI-10281601">
        <id>Q9UMX2</id>
    </interactant>
    <interactant intactId="EBI-1054824">
        <id>O14977</id>
        <label>AZIN1</label>
    </interactant>
    <organismsDiffer>false</organismsDiffer>
    <experiments>7</experiments>
</comment>
<comment type="interaction">
    <interactant intactId="EBI-10281601">
        <id>Q9UMX2</id>
    </interactant>
    <interactant intactId="EBI-10281609">
        <id>Q96A70</id>
        <label>AZIN2</label>
    </interactant>
    <organismsDiffer>false</organismsDiffer>
    <experiments>5</experiments>
</comment>
<comment type="interaction">
    <interactant intactId="EBI-10281601">
        <id>Q9UMX2</id>
    </interactant>
    <interactant intactId="EBI-2548012">
        <id>Q9H2G9</id>
        <label>BLZF1</label>
    </interactant>
    <organismsDiffer>false</organismsDiffer>
    <experiments>4</experiments>
</comment>
<comment type="interaction">
    <interactant intactId="EBI-10281601">
        <id>Q9UMX2</id>
    </interactant>
    <interactant intactId="EBI-946029">
        <id>Q6P1W5</id>
        <label>C1orf94</label>
    </interactant>
    <organismsDiffer>false</organismsDiffer>
    <experiments>4</experiments>
</comment>
<comment type="interaction">
    <interactant intactId="EBI-10281601">
        <id>Q9UMX2</id>
    </interactant>
    <interactant intactId="EBI-747204">
        <id>Q9UKT9</id>
        <label>IKZF3</label>
    </interactant>
    <organismsDiffer>false</organismsDiffer>
    <experiments>3</experiments>
</comment>
<comment type="interaction">
    <interactant intactId="EBI-10281601">
        <id>Q9UMX2</id>
    </interactant>
    <interactant intactId="EBI-2686809">
        <id>Q96JM7</id>
        <label>L3MBTL3</label>
    </interactant>
    <organismsDiffer>false</organismsDiffer>
    <experiments>3</experiments>
</comment>
<comment type="interaction">
    <interactant intactId="EBI-10281601">
        <id>Q9UMX2</id>
    </interactant>
    <interactant intactId="EBI-1044287">
        <id>P11926</id>
        <label>ODC1</label>
    </interactant>
    <organismsDiffer>false</organismsDiffer>
    <experiments>7</experiments>
</comment>
<comment type="interaction">
    <interactant intactId="EBI-10281601">
        <id>Q9UMX2</id>
    </interactant>
    <interactant intactId="EBI-307352">
        <id>Q04864</id>
        <label>REL</label>
    </interactant>
    <organismsDiffer>false</organismsDiffer>
    <experiments>3</experiments>
</comment>
<comment type="interaction">
    <interactant intactId="EBI-12049527">
        <id>Q9UMX2-2</id>
    </interactant>
    <interactant intactId="EBI-1054824">
        <id>O14977</id>
        <label>AZIN1</label>
    </interactant>
    <organismsDiffer>false</organismsDiffer>
    <experiments>3</experiments>
</comment>
<comment type="interaction">
    <interactant intactId="EBI-12049527">
        <id>Q9UMX2-2</id>
    </interactant>
    <interactant intactId="EBI-10281609">
        <id>Q96A70</id>
        <label>AZIN2</label>
    </interactant>
    <organismsDiffer>false</organismsDiffer>
    <experiments>3</experiments>
</comment>
<comment type="interaction">
    <interactant intactId="EBI-12049527">
        <id>Q9UMX2-2</id>
    </interactant>
    <interactant intactId="EBI-1044287">
        <id>P11926</id>
        <label>ODC1</label>
    </interactant>
    <organismsDiffer>false</organismsDiffer>
    <experiments>3</experiments>
</comment>
<comment type="interaction">
    <interactant intactId="EBI-12049527">
        <id>Q9UMX2-2</id>
    </interactant>
    <interactant intactId="EBI-12219503">
        <id>P01189</id>
        <label>POMC</label>
    </interactant>
    <organismsDiffer>false</organismsDiffer>
    <experiments>3</experiments>
</comment>
<comment type="interaction">
    <interactant intactId="EBI-12049527">
        <id>Q9UMX2-2</id>
    </interactant>
    <interactant intactId="EBI-12029004">
        <id>P78424</id>
        <label>POU6F2</label>
    </interactant>
    <organismsDiffer>false</organismsDiffer>
    <experiments>3</experiments>
</comment>
<comment type="interaction">
    <interactant intactId="EBI-12049527">
        <id>Q9UMX2-2</id>
    </interactant>
    <interactant intactId="EBI-10829018">
        <id>Q04864-2</id>
        <label>REL</label>
    </interactant>
    <organismsDiffer>false</organismsDiffer>
    <experiments>3</experiments>
</comment>
<comment type="interaction">
    <interactant intactId="EBI-12049527">
        <id>Q9UMX2-2</id>
    </interactant>
    <interactant intactId="EBI-11139477">
        <id>Q96N21</id>
        <label>TEPSIN</label>
    </interactant>
    <organismsDiffer>false</organismsDiffer>
    <experiments>3</experiments>
</comment>
<comment type="interaction">
    <interactant intactId="EBI-12049527">
        <id>Q9UMX2-2</id>
    </interactant>
    <interactant intactId="EBI-12287587">
        <id>B2RXF5</id>
        <label>ZBTB42</label>
    </interactant>
    <organismsDiffer>false</organismsDiffer>
    <experiments>3</experiments>
</comment>
<comment type="interaction">
    <interactant intactId="EBI-12049527">
        <id>Q9UMX2-2</id>
    </interactant>
    <interactant intactId="EBI-4395669">
        <id>Q6ZNG0</id>
        <label>ZNF620</label>
    </interactant>
    <organismsDiffer>false</organismsDiffer>
    <experiments>3</experiments>
</comment>
<comment type="subcellular location">
    <subcellularLocation>
        <location>Nucleus</location>
    </subcellularLocation>
    <subcellularLocation>
        <location evidence="1">Cytoplasm</location>
    </subcellularLocation>
</comment>
<comment type="alternative products">
    <event type="alternative splicing"/>
    <event type="ribosomal frameshifting"/>
    <isoform>
        <id>Q9UMX2-1</id>
        <name>1</name>
        <sequence type="displayed"/>
    </isoform>
    <isoform>
        <id>Q9UMX2-2</id>
        <name>2</name>
        <sequence type="described" ref="VSP_056789 VSP_056790 VSP_056791"/>
    </isoform>
    <text>A ribosomal frameshift occurs between the codons for Ser-76 and Glu-77. An autoregulatory mechanism enables modulation of frameshifting according to the cellular concentration of polyamines.</text>
</comment>
<comment type="tissue specificity">
    <text>Testis specific.</text>
</comment>
<comment type="developmental stage">
    <text>Expression starts early in spermiogenesis and finishes in the late spermatid phase.</text>
</comment>
<comment type="similarity">
    <text evidence="7">Belongs to the ODC antizyme family.</text>
</comment>
<comment type="sequence caution" evidence="7">
    <conflict type="erroneous initiation">
        <sequence resource="EMBL-CDS" id="AAD51734"/>
    </conflict>
    <text>Truncated N-terminus.</text>
</comment>
<comment type="sequence caution" evidence="7">
    <conflict type="miscellaneous discrepancy">
        <sequence resource="EMBL-CDS" id="AAD51734"/>
    </conflict>
    <text>Unusual initiator. The initiator methionine is coded by a non-canonical CTG leucine codon.</text>
</comment>
<name>OAZ3_HUMAN</name>
<dbReference type="EMBL" id="AF175296">
    <property type="protein sequence ID" value="AAD51734.1"/>
    <property type="status" value="ALT_SEQ"/>
    <property type="molecule type" value="mRNA"/>
</dbReference>
<dbReference type="EMBL" id="AL589765">
    <property type="status" value="NOT_ANNOTATED_CDS"/>
    <property type="molecule type" value="Genomic_DNA"/>
</dbReference>
<dbReference type="EMBL" id="BC073949">
    <property type="protein sequence ID" value="AAH73949.1"/>
    <property type="molecule type" value="mRNA"/>
</dbReference>
<dbReference type="CCDS" id="CCDS58028.1">
    <molecule id="Q9UMX2-2"/>
</dbReference>
<dbReference type="CCDS" id="CCDS81378.1">
    <molecule id="Q9UMX2-1"/>
</dbReference>
<dbReference type="RefSeq" id="NP_001128411.1">
    <property type="nucleotide sequence ID" value="NM_001134939.1"/>
</dbReference>
<dbReference type="RefSeq" id="NP_001288300.1">
    <property type="nucleotide sequence ID" value="NM_001301371.1"/>
</dbReference>
<dbReference type="RefSeq" id="NP_057262.2">
    <molecule id="Q9UMX2-1"/>
    <property type="nucleotide sequence ID" value="NM_016178.2"/>
</dbReference>
<dbReference type="SMR" id="Q9UMX2"/>
<dbReference type="BioGRID" id="119677">
    <property type="interactions" value="41"/>
</dbReference>
<dbReference type="FunCoup" id="Q9UMX2">
    <property type="interactions" value="683"/>
</dbReference>
<dbReference type="IntAct" id="Q9UMX2">
    <property type="interactions" value="38"/>
</dbReference>
<dbReference type="STRING" id="9606.ENSP00000383784"/>
<dbReference type="iPTMnet" id="Q9UMX2"/>
<dbReference type="PhosphoSitePlus" id="Q9UMX2"/>
<dbReference type="BioMuta" id="OAZ3"/>
<dbReference type="DMDM" id="13431750"/>
<dbReference type="MassIVE" id="Q9UMX2"/>
<dbReference type="PaxDb" id="9606-ENSP00000313922"/>
<dbReference type="PeptideAtlas" id="Q9UMX2"/>
<dbReference type="ProteomicsDB" id="66300"/>
<dbReference type="ProteomicsDB" id="85220">
    <molecule id="Q9UMX2-1"/>
</dbReference>
<dbReference type="Antibodypedia" id="34072">
    <property type="antibodies" value="85 antibodies from 20 providers"/>
</dbReference>
<dbReference type="DNASU" id="51686"/>
<dbReference type="Ensembl" id="ENST00000400999.7">
    <molecule id="Q9UMX2-1"/>
    <property type="protein sequence ID" value="ENSP00000383784.3"/>
    <property type="gene ID" value="ENSG00000143450.19"/>
</dbReference>
<dbReference type="GeneID" id="51686"/>
<dbReference type="KEGG" id="hsa:51686"/>
<dbReference type="UCSC" id="uc010pdl.3">
    <molecule id="Q9UMX2-1"/>
    <property type="organism name" value="human"/>
</dbReference>
<dbReference type="AGR" id="HGNC:8097"/>
<dbReference type="CTD" id="51686"/>
<dbReference type="DisGeNET" id="51686"/>
<dbReference type="GeneCards" id="OAZ3"/>
<dbReference type="HGNC" id="HGNC:8097">
    <property type="gene designation" value="OAZ3"/>
</dbReference>
<dbReference type="HPA" id="ENSG00000143450">
    <property type="expression patterns" value="Tissue enriched (testis)"/>
</dbReference>
<dbReference type="MIM" id="605138">
    <property type="type" value="gene"/>
</dbReference>
<dbReference type="neXtProt" id="NX_Q9UMX2"/>
<dbReference type="OpenTargets" id="ENSG00000143450"/>
<dbReference type="PharmGKB" id="PA31886"/>
<dbReference type="VEuPathDB" id="HostDB:ENSG00000143450"/>
<dbReference type="eggNOG" id="KOG4387">
    <property type="taxonomic scope" value="Eukaryota"/>
</dbReference>
<dbReference type="GeneTree" id="ENSGT00940000161581"/>
<dbReference type="HOGENOM" id="CLU_085486_0_0_1"/>
<dbReference type="InParanoid" id="Q9UMX2"/>
<dbReference type="OrthoDB" id="5959761at2759"/>
<dbReference type="PAN-GO" id="Q9UMX2">
    <property type="GO annotations" value="4 GO annotations based on evolutionary models"/>
</dbReference>
<dbReference type="PathwayCommons" id="Q9UMX2"/>
<dbReference type="Reactome" id="R-HSA-350562">
    <property type="pathway name" value="Regulation of ornithine decarboxylase (ODC)"/>
</dbReference>
<dbReference type="SignaLink" id="Q9UMX2"/>
<dbReference type="BioGRID-ORCS" id="51686">
    <property type="hits" value="10 hits in 1156 CRISPR screens"/>
</dbReference>
<dbReference type="GenomeRNAi" id="51686"/>
<dbReference type="Pharos" id="Q9UMX2">
    <property type="development level" value="Tbio"/>
</dbReference>
<dbReference type="PRO" id="PR:Q9UMX2"/>
<dbReference type="Proteomes" id="UP000005640">
    <property type="component" value="Chromosome 1"/>
</dbReference>
<dbReference type="RNAct" id="Q9UMX2">
    <property type="molecule type" value="protein"/>
</dbReference>
<dbReference type="Bgee" id="ENSG00000143450">
    <property type="expression patterns" value="Expressed in sperm and 112 other cell types or tissues"/>
</dbReference>
<dbReference type="ExpressionAtlas" id="Q9UMX2">
    <property type="expression patterns" value="baseline and differential"/>
</dbReference>
<dbReference type="GO" id="GO:0072562">
    <property type="term" value="C:blood microparticle"/>
    <property type="evidence" value="ECO:0007005"/>
    <property type="project" value="UniProtKB"/>
</dbReference>
<dbReference type="GO" id="GO:0005737">
    <property type="term" value="C:cytoplasm"/>
    <property type="evidence" value="ECO:0000318"/>
    <property type="project" value="GO_Central"/>
</dbReference>
<dbReference type="GO" id="GO:0005829">
    <property type="term" value="C:cytosol"/>
    <property type="evidence" value="ECO:0000304"/>
    <property type="project" value="Reactome"/>
</dbReference>
<dbReference type="GO" id="GO:0005654">
    <property type="term" value="C:nucleoplasm"/>
    <property type="evidence" value="ECO:0000314"/>
    <property type="project" value="HPA"/>
</dbReference>
<dbReference type="GO" id="GO:0005634">
    <property type="term" value="C:nucleus"/>
    <property type="evidence" value="ECO:0007005"/>
    <property type="project" value="UniProtKB"/>
</dbReference>
<dbReference type="GO" id="GO:0036126">
    <property type="term" value="C:sperm flagellum"/>
    <property type="evidence" value="ECO:0007669"/>
    <property type="project" value="Ensembl"/>
</dbReference>
<dbReference type="GO" id="GO:0071532">
    <property type="term" value="F:ankyrin repeat binding"/>
    <property type="evidence" value="ECO:0007669"/>
    <property type="project" value="Ensembl"/>
</dbReference>
<dbReference type="GO" id="GO:0008073">
    <property type="term" value="F:ornithine decarboxylase inhibitor activity"/>
    <property type="evidence" value="ECO:0000314"/>
    <property type="project" value="UniProtKB"/>
</dbReference>
<dbReference type="GO" id="GO:1902268">
    <property type="term" value="P:negative regulation of polyamine transmembrane transport"/>
    <property type="evidence" value="ECO:0000250"/>
    <property type="project" value="UniProtKB"/>
</dbReference>
<dbReference type="GO" id="GO:0051497">
    <property type="term" value="P:negative regulation of stress fiber assembly"/>
    <property type="evidence" value="ECO:0007669"/>
    <property type="project" value="Ensembl"/>
</dbReference>
<dbReference type="GO" id="GO:0006596">
    <property type="term" value="P:polyamine biosynthetic process"/>
    <property type="evidence" value="ECO:0007669"/>
    <property type="project" value="UniProtKB-KW"/>
</dbReference>
<dbReference type="GO" id="GO:0090316">
    <property type="term" value="P:positive regulation of intracellular protein transport"/>
    <property type="evidence" value="ECO:0007669"/>
    <property type="project" value="Ensembl"/>
</dbReference>
<dbReference type="GO" id="GO:0045732">
    <property type="term" value="P:positive regulation of protein catabolic process"/>
    <property type="evidence" value="ECO:0000250"/>
    <property type="project" value="UniProtKB"/>
</dbReference>
<dbReference type="GO" id="GO:0007283">
    <property type="term" value="P:spermatogenesis"/>
    <property type="evidence" value="ECO:0000304"/>
    <property type="project" value="ProtInc"/>
</dbReference>
<dbReference type="GO" id="GO:0075523">
    <property type="term" value="P:viral translational frameshifting"/>
    <property type="evidence" value="ECO:0007669"/>
    <property type="project" value="UniProtKB-KW"/>
</dbReference>
<dbReference type="FunFam" id="3.40.630.60:FF:000002">
    <property type="entry name" value="Ornithine decarboxylase antizyme 3"/>
    <property type="match status" value="1"/>
</dbReference>
<dbReference type="Gene3D" id="3.40.630.60">
    <property type="match status" value="1"/>
</dbReference>
<dbReference type="InterPro" id="IPR016181">
    <property type="entry name" value="Acyl_CoA_acyltransferase"/>
</dbReference>
<dbReference type="InterPro" id="IPR002993">
    <property type="entry name" value="ODC_AZ"/>
</dbReference>
<dbReference type="InterPro" id="IPR038581">
    <property type="entry name" value="ODC_AZ_sf"/>
</dbReference>
<dbReference type="PANTHER" id="PTHR10279">
    <property type="entry name" value="ORNITHINE DECARBOXYLASE ANTIZYME"/>
    <property type="match status" value="1"/>
</dbReference>
<dbReference type="PANTHER" id="PTHR10279:SF9">
    <property type="entry name" value="ORNITHINE DECARBOXYLASE ANTIZYME 3"/>
    <property type="match status" value="1"/>
</dbReference>
<dbReference type="Pfam" id="PF02100">
    <property type="entry name" value="ODC_AZ"/>
    <property type="match status" value="1"/>
</dbReference>
<dbReference type="SUPFAM" id="SSF55729">
    <property type="entry name" value="Acyl-CoA N-acyltransferases (Nat)"/>
    <property type="match status" value="1"/>
</dbReference>
<dbReference type="PROSITE" id="PS01337">
    <property type="entry name" value="ODC_AZ"/>
    <property type="match status" value="1"/>
</dbReference>
<proteinExistence type="evidence at protein level"/>
<reference key="1">
    <citation type="journal article" date="2000" name="Proc. Natl. Acad. Sci. U.S.A.">
        <title>Discovery of a spermatogenesis stage-specific ornithine decarboxylase antizyme: antizyme 3.</title>
        <authorList>
            <person name="Ivanov I.P."/>
            <person name="Rohrwasser A."/>
            <person name="Terreros D.A."/>
            <person name="Gesteland R.F."/>
            <person name="Atkins J.F."/>
        </authorList>
    </citation>
    <scope>NUCLEOTIDE SEQUENCE [MRNA] (ISOFORM 1)</scope>
</reference>
<reference key="2">
    <citation type="journal article" date="2006" name="Nature">
        <title>The DNA sequence and biological annotation of human chromosome 1.</title>
        <authorList>
            <person name="Gregory S.G."/>
            <person name="Barlow K.F."/>
            <person name="McLay K.E."/>
            <person name="Kaul R."/>
            <person name="Swarbreck D."/>
            <person name="Dunham A."/>
            <person name="Scott C.E."/>
            <person name="Howe K.L."/>
            <person name="Woodfine K."/>
            <person name="Spencer C.C.A."/>
            <person name="Jones M.C."/>
            <person name="Gillson C."/>
            <person name="Searle S."/>
            <person name="Zhou Y."/>
            <person name="Kokocinski F."/>
            <person name="McDonald L."/>
            <person name="Evans R."/>
            <person name="Phillips K."/>
            <person name="Atkinson A."/>
            <person name="Cooper R."/>
            <person name="Jones C."/>
            <person name="Hall R.E."/>
            <person name="Andrews T.D."/>
            <person name="Lloyd C."/>
            <person name="Ainscough R."/>
            <person name="Almeida J.P."/>
            <person name="Ambrose K.D."/>
            <person name="Anderson F."/>
            <person name="Andrew R.W."/>
            <person name="Ashwell R.I.S."/>
            <person name="Aubin K."/>
            <person name="Babbage A.K."/>
            <person name="Bagguley C.L."/>
            <person name="Bailey J."/>
            <person name="Beasley H."/>
            <person name="Bethel G."/>
            <person name="Bird C.P."/>
            <person name="Bray-Allen S."/>
            <person name="Brown J.Y."/>
            <person name="Brown A.J."/>
            <person name="Buckley D."/>
            <person name="Burton J."/>
            <person name="Bye J."/>
            <person name="Carder C."/>
            <person name="Chapman J.C."/>
            <person name="Clark S.Y."/>
            <person name="Clarke G."/>
            <person name="Clee C."/>
            <person name="Cobley V."/>
            <person name="Collier R.E."/>
            <person name="Corby N."/>
            <person name="Coville G.J."/>
            <person name="Davies J."/>
            <person name="Deadman R."/>
            <person name="Dunn M."/>
            <person name="Earthrowl M."/>
            <person name="Ellington A.G."/>
            <person name="Errington H."/>
            <person name="Frankish A."/>
            <person name="Frankland J."/>
            <person name="French L."/>
            <person name="Garner P."/>
            <person name="Garnett J."/>
            <person name="Gay L."/>
            <person name="Ghori M.R.J."/>
            <person name="Gibson R."/>
            <person name="Gilby L.M."/>
            <person name="Gillett W."/>
            <person name="Glithero R.J."/>
            <person name="Grafham D.V."/>
            <person name="Griffiths C."/>
            <person name="Griffiths-Jones S."/>
            <person name="Grocock R."/>
            <person name="Hammond S."/>
            <person name="Harrison E.S.I."/>
            <person name="Hart E."/>
            <person name="Haugen E."/>
            <person name="Heath P.D."/>
            <person name="Holmes S."/>
            <person name="Holt K."/>
            <person name="Howden P.J."/>
            <person name="Hunt A.R."/>
            <person name="Hunt S.E."/>
            <person name="Hunter G."/>
            <person name="Isherwood J."/>
            <person name="James R."/>
            <person name="Johnson C."/>
            <person name="Johnson D."/>
            <person name="Joy A."/>
            <person name="Kay M."/>
            <person name="Kershaw J.K."/>
            <person name="Kibukawa M."/>
            <person name="Kimberley A.M."/>
            <person name="King A."/>
            <person name="Knights A.J."/>
            <person name="Lad H."/>
            <person name="Laird G."/>
            <person name="Lawlor S."/>
            <person name="Leongamornlert D.A."/>
            <person name="Lloyd D.M."/>
            <person name="Loveland J."/>
            <person name="Lovell J."/>
            <person name="Lush M.J."/>
            <person name="Lyne R."/>
            <person name="Martin S."/>
            <person name="Mashreghi-Mohammadi M."/>
            <person name="Matthews L."/>
            <person name="Matthews N.S.W."/>
            <person name="McLaren S."/>
            <person name="Milne S."/>
            <person name="Mistry S."/>
            <person name="Moore M.J.F."/>
            <person name="Nickerson T."/>
            <person name="O'Dell C.N."/>
            <person name="Oliver K."/>
            <person name="Palmeiri A."/>
            <person name="Palmer S.A."/>
            <person name="Parker A."/>
            <person name="Patel D."/>
            <person name="Pearce A.V."/>
            <person name="Peck A.I."/>
            <person name="Pelan S."/>
            <person name="Phelps K."/>
            <person name="Phillimore B.J."/>
            <person name="Plumb R."/>
            <person name="Rajan J."/>
            <person name="Raymond C."/>
            <person name="Rouse G."/>
            <person name="Saenphimmachak C."/>
            <person name="Sehra H.K."/>
            <person name="Sheridan E."/>
            <person name="Shownkeen R."/>
            <person name="Sims S."/>
            <person name="Skuce C.D."/>
            <person name="Smith M."/>
            <person name="Steward C."/>
            <person name="Subramanian S."/>
            <person name="Sycamore N."/>
            <person name="Tracey A."/>
            <person name="Tromans A."/>
            <person name="Van Helmond Z."/>
            <person name="Wall M."/>
            <person name="Wallis J.M."/>
            <person name="White S."/>
            <person name="Whitehead S.L."/>
            <person name="Wilkinson J.E."/>
            <person name="Willey D.L."/>
            <person name="Williams H."/>
            <person name="Wilming L."/>
            <person name="Wray P.W."/>
            <person name="Wu Z."/>
            <person name="Coulson A."/>
            <person name="Vaudin M."/>
            <person name="Sulston J.E."/>
            <person name="Durbin R.M."/>
            <person name="Hubbard T."/>
            <person name="Wooster R."/>
            <person name="Dunham I."/>
            <person name="Carter N.P."/>
            <person name="McVean G."/>
            <person name="Ross M.T."/>
            <person name="Harrow J."/>
            <person name="Olson M.V."/>
            <person name="Beck S."/>
            <person name="Rogers J."/>
            <person name="Bentley D.R."/>
        </authorList>
    </citation>
    <scope>NUCLEOTIDE SEQUENCE [LARGE SCALE GENOMIC DNA]</scope>
</reference>
<reference key="3">
    <citation type="journal article" date="2004" name="Genome Res.">
        <title>The status, quality, and expansion of the NIH full-length cDNA project: the Mammalian Gene Collection (MGC).</title>
        <authorList>
            <consortium name="The MGC Project Team"/>
        </authorList>
    </citation>
    <scope>NUCLEOTIDE SEQUENCE [LARGE SCALE MRNA] (ISOFORM 2)</scope>
    <source>
        <tissue>Mammary gland</tissue>
    </source>
</reference>
<reference key="4">
    <citation type="journal article" date="2008" name="Biochem. J.">
        <title>Human ornithine decarboxylase paralogue (ODCp) is an antizyme inhibitor but not an arginine decarboxylase.</title>
        <authorList>
            <person name="Kanerva K."/>
            <person name="Makitie L.T."/>
            <person name="Pelander A."/>
            <person name="Heiskala M."/>
            <person name="Andersson L.C."/>
        </authorList>
    </citation>
    <scope>FUNCTION</scope>
    <scope>INTERACTION WITH AZIN2</scope>
</reference>
<organism>
    <name type="scientific">Homo sapiens</name>
    <name type="common">Human</name>
    <dbReference type="NCBI Taxonomy" id="9606"/>
    <lineage>
        <taxon>Eukaryota</taxon>
        <taxon>Metazoa</taxon>
        <taxon>Chordata</taxon>
        <taxon>Craniata</taxon>
        <taxon>Vertebrata</taxon>
        <taxon>Euteleostomi</taxon>
        <taxon>Mammalia</taxon>
        <taxon>Eutheria</taxon>
        <taxon>Euarchontoglires</taxon>
        <taxon>Primates</taxon>
        <taxon>Haplorrhini</taxon>
        <taxon>Catarrhini</taxon>
        <taxon>Hominidae</taxon>
        <taxon>Homo</taxon>
    </lineage>
</organism>
<feature type="chain" id="PRO_0000220859" description="Ornithine decarboxylase antizyme 3">
    <location>
        <begin position="1"/>
        <end position="235"/>
    </location>
</feature>
<feature type="modified residue" description="Phosphoserine" evidence="2">
    <location>
        <position position="9"/>
    </location>
</feature>
<feature type="modified residue" description="Phosphoserine" evidence="2">
    <location>
        <position position="12"/>
    </location>
</feature>
<feature type="splice variant" id="VSP_056789" description="In isoform 2.">
    <location>
        <begin position="1"/>
        <end position="48"/>
    </location>
</feature>
<feature type="splice variant" id="VSP_056790" description="In isoform 2." evidence="6">
    <original>MLPRCYKS</original>
    <variation>MTVPWRPGKRR</variation>
    <location>
        <begin position="49"/>
        <end position="56"/>
    </location>
</feature>
<feature type="splice variant" id="VSP_056791" description="In isoform 2." evidence="6">
    <original>SCLQCS</original>
    <variation>PASSAP</variation>
    <location>
        <begin position="71"/>
        <end position="76"/>
    </location>
</feature>
<evidence type="ECO:0000250" key="1"/>
<evidence type="ECO:0000250" key="2">
    <source>
        <dbReference type="UniProtKB" id="A1BPI0"/>
    </source>
</evidence>
<evidence type="ECO:0000250" key="3">
    <source>
        <dbReference type="UniProtKB" id="P54368"/>
    </source>
</evidence>
<evidence type="ECO:0000250" key="4">
    <source>
        <dbReference type="UniProtKB" id="Q9R109"/>
    </source>
</evidence>
<evidence type="ECO:0000269" key="5">
    <source>
    </source>
</evidence>
<evidence type="ECO:0000303" key="6">
    <source>
    </source>
</evidence>
<evidence type="ECO:0000305" key="7"/>